<proteinExistence type="inferred from homology"/>
<name>SEC65_SCHPO</name>
<keyword id="KW-0963">Cytoplasm</keyword>
<keyword id="KW-0539">Nucleus</keyword>
<keyword id="KW-1185">Reference proteome</keyword>
<keyword id="KW-0687">Ribonucleoprotein</keyword>
<keyword id="KW-0694">RNA-binding</keyword>
<keyword id="KW-0733">Signal recognition particle</keyword>
<sequence>MISHLLPTTSLTIHMPSIILYPIYFDKSRPRRFRCVPKDKAILNPLAKNIADVVRDLGYKCKLEPLKTHPADWVNPGRVEMVLPEKIQKKYVINEIAKVLLLRPTVKTDPLSLPIQNVPARLPENPPAYPKGVLGNTILPLHSPALSGGGISENMFQEMMQEMQKQPGLAGGMNPMAALAGMGGPAPPMPTPQASSSQRKQKSIEPEYDLDLE</sequence>
<gene>
    <name type="primary">sec65</name>
    <name type="ORF">SPCC126.15c</name>
</gene>
<protein>
    <recommendedName>
        <fullName>Signal recognition particle sec65 subunit</fullName>
    </recommendedName>
</protein>
<dbReference type="EMBL" id="CU329672">
    <property type="protein sequence ID" value="CAA22484.2"/>
    <property type="molecule type" value="Genomic_DNA"/>
</dbReference>
<dbReference type="PIR" id="T40919">
    <property type="entry name" value="T40919"/>
</dbReference>
<dbReference type="RefSeq" id="NP_588458.2">
    <property type="nucleotide sequence ID" value="NM_001023449.2"/>
</dbReference>
<dbReference type="SMR" id="O94407"/>
<dbReference type="BioGRID" id="275633">
    <property type="interactions" value="3"/>
</dbReference>
<dbReference type="FunCoup" id="O94407">
    <property type="interactions" value="39"/>
</dbReference>
<dbReference type="STRING" id="284812.O94407"/>
<dbReference type="iPTMnet" id="O94407"/>
<dbReference type="PaxDb" id="4896-SPCC126.15c.1"/>
<dbReference type="EnsemblFungi" id="SPCC126.15c.1">
    <property type="protein sequence ID" value="SPCC126.15c.1:pep"/>
    <property type="gene ID" value="SPCC126.15c"/>
</dbReference>
<dbReference type="GeneID" id="2539061"/>
<dbReference type="KEGG" id="spo:2539061"/>
<dbReference type="PomBase" id="SPCC126.15c">
    <property type="gene designation" value="sec65"/>
</dbReference>
<dbReference type="VEuPathDB" id="FungiDB:SPCC126.15c"/>
<dbReference type="eggNOG" id="KOG3198">
    <property type="taxonomic scope" value="Eukaryota"/>
</dbReference>
<dbReference type="HOGENOM" id="CLU_1397080_0_0_1"/>
<dbReference type="InParanoid" id="O94407"/>
<dbReference type="OMA" id="QDMMQEM"/>
<dbReference type="Reactome" id="R-SPO-1799339">
    <property type="pathway name" value="SRP-dependent cotranslational protein targeting to membrane"/>
</dbReference>
<dbReference type="PRO" id="PR:O94407"/>
<dbReference type="Proteomes" id="UP000002485">
    <property type="component" value="Chromosome III"/>
</dbReference>
<dbReference type="GO" id="GO:0005829">
    <property type="term" value="C:cytosol"/>
    <property type="evidence" value="ECO:0007005"/>
    <property type="project" value="PomBase"/>
</dbReference>
<dbReference type="GO" id="GO:0005634">
    <property type="term" value="C:nucleus"/>
    <property type="evidence" value="ECO:0007005"/>
    <property type="project" value="PomBase"/>
</dbReference>
<dbReference type="GO" id="GO:0005786">
    <property type="term" value="C:signal recognition particle, endoplasmic reticulum targeting"/>
    <property type="evidence" value="ECO:0000318"/>
    <property type="project" value="GO_Central"/>
</dbReference>
<dbReference type="GO" id="GO:0008312">
    <property type="term" value="F:7S RNA binding"/>
    <property type="evidence" value="ECO:0000318"/>
    <property type="project" value="GO_Central"/>
</dbReference>
<dbReference type="GO" id="GO:0006886">
    <property type="term" value="P:intracellular protein transport"/>
    <property type="evidence" value="ECO:0000303"/>
    <property type="project" value="PomBase"/>
</dbReference>
<dbReference type="GO" id="GO:0006617">
    <property type="term" value="P:SRP-dependent cotranslational protein targeting to membrane, signal sequence recognition"/>
    <property type="evidence" value="ECO:0000318"/>
    <property type="project" value="GO_Central"/>
</dbReference>
<dbReference type="Gene3D" id="3.30.56.30">
    <property type="entry name" value="Signal recognition particle, SRP19-like subunit"/>
    <property type="match status" value="1"/>
</dbReference>
<dbReference type="InterPro" id="IPR002778">
    <property type="entry name" value="Signal_recog_particle_SRP19"/>
</dbReference>
<dbReference type="InterPro" id="IPR036521">
    <property type="entry name" value="SRP19-like_sf"/>
</dbReference>
<dbReference type="PANTHER" id="PTHR17453">
    <property type="entry name" value="SIGNAL RECOGNITION PARTICLE 19 KD PROTEIN"/>
    <property type="match status" value="1"/>
</dbReference>
<dbReference type="PANTHER" id="PTHR17453:SF0">
    <property type="entry name" value="SIGNAL RECOGNITION PARTICLE 19 KDA PROTEIN"/>
    <property type="match status" value="1"/>
</dbReference>
<dbReference type="Pfam" id="PF01922">
    <property type="entry name" value="SRP19"/>
    <property type="match status" value="1"/>
</dbReference>
<dbReference type="SUPFAM" id="SSF69695">
    <property type="entry name" value="SRP19"/>
    <property type="match status" value="1"/>
</dbReference>
<feature type="chain" id="PRO_0000135210" description="Signal recognition particle sec65 subunit">
    <location>
        <begin position="1"/>
        <end position="213"/>
    </location>
</feature>
<feature type="region of interest" description="Disordered" evidence="2">
    <location>
        <begin position="176"/>
        <end position="213"/>
    </location>
</feature>
<evidence type="ECO:0000250" key="1"/>
<evidence type="ECO:0000256" key="2">
    <source>
        <dbReference type="SAM" id="MobiDB-lite"/>
    </source>
</evidence>
<evidence type="ECO:0000269" key="3">
    <source>
    </source>
</evidence>
<evidence type="ECO:0000269" key="4">
    <source>
    </source>
</evidence>
<evidence type="ECO:0000305" key="5"/>
<comment type="function">
    <text evidence="1">Signal-recognition-particle assembly has a crucial role in targeting secretory proteins to the rough endoplasmic reticulum membrane. It must be involved intimately in the translocation of a wide variety of protein substrates (By similarity).</text>
</comment>
<comment type="subunit">
    <text evidence="1">Fungal signal recognition particle consists of a 7S RNA molecule (scR1) and at least six protein subunits: srp72, srp68, srp54, sec65, srp21 and srp14.</text>
</comment>
<comment type="subcellular location">
    <subcellularLocation>
        <location evidence="3">Cytoplasm</location>
    </subcellularLocation>
    <subcellularLocation>
        <location evidence="3">Nucleus</location>
    </subcellularLocation>
</comment>
<comment type="disruption phenotype">
    <text evidence="4">Leads to sensitivity to camptothecin, thiabendazole, microtubule depolymerizing drugs and DNA damaging agents.</text>
</comment>
<comment type="similarity">
    <text evidence="5">Belongs to the SRP19 family.</text>
</comment>
<organism>
    <name type="scientific">Schizosaccharomyces pombe (strain 972 / ATCC 24843)</name>
    <name type="common">Fission yeast</name>
    <dbReference type="NCBI Taxonomy" id="284812"/>
    <lineage>
        <taxon>Eukaryota</taxon>
        <taxon>Fungi</taxon>
        <taxon>Dikarya</taxon>
        <taxon>Ascomycota</taxon>
        <taxon>Taphrinomycotina</taxon>
        <taxon>Schizosaccharomycetes</taxon>
        <taxon>Schizosaccharomycetales</taxon>
        <taxon>Schizosaccharomycetaceae</taxon>
        <taxon>Schizosaccharomyces</taxon>
    </lineage>
</organism>
<reference key="1">
    <citation type="journal article" date="2002" name="Nature">
        <title>The genome sequence of Schizosaccharomyces pombe.</title>
        <authorList>
            <person name="Wood V."/>
            <person name="Gwilliam R."/>
            <person name="Rajandream M.A."/>
            <person name="Lyne M.H."/>
            <person name="Lyne R."/>
            <person name="Stewart A."/>
            <person name="Sgouros J.G."/>
            <person name="Peat N."/>
            <person name="Hayles J."/>
            <person name="Baker S.G."/>
            <person name="Basham D."/>
            <person name="Bowman S."/>
            <person name="Brooks K."/>
            <person name="Brown D."/>
            <person name="Brown S."/>
            <person name="Chillingworth T."/>
            <person name="Churcher C.M."/>
            <person name="Collins M."/>
            <person name="Connor R."/>
            <person name="Cronin A."/>
            <person name="Davis P."/>
            <person name="Feltwell T."/>
            <person name="Fraser A."/>
            <person name="Gentles S."/>
            <person name="Goble A."/>
            <person name="Hamlin N."/>
            <person name="Harris D.E."/>
            <person name="Hidalgo J."/>
            <person name="Hodgson G."/>
            <person name="Holroyd S."/>
            <person name="Hornsby T."/>
            <person name="Howarth S."/>
            <person name="Huckle E.J."/>
            <person name="Hunt S."/>
            <person name="Jagels K."/>
            <person name="James K.D."/>
            <person name="Jones L."/>
            <person name="Jones M."/>
            <person name="Leather S."/>
            <person name="McDonald S."/>
            <person name="McLean J."/>
            <person name="Mooney P."/>
            <person name="Moule S."/>
            <person name="Mungall K.L."/>
            <person name="Murphy L.D."/>
            <person name="Niblett D."/>
            <person name="Odell C."/>
            <person name="Oliver K."/>
            <person name="O'Neil S."/>
            <person name="Pearson D."/>
            <person name="Quail M.A."/>
            <person name="Rabbinowitsch E."/>
            <person name="Rutherford K.M."/>
            <person name="Rutter S."/>
            <person name="Saunders D."/>
            <person name="Seeger K."/>
            <person name="Sharp S."/>
            <person name="Skelton J."/>
            <person name="Simmonds M.N."/>
            <person name="Squares R."/>
            <person name="Squares S."/>
            <person name="Stevens K."/>
            <person name="Taylor K."/>
            <person name="Taylor R.G."/>
            <person name="Tivey A."/>
            <person name="Walsh S.V."/>
            <person name="Warren T."/>
            <person name="Whitehead S."/>
            <person name="Woodward J.R."/>
            <person name="Volckaert G."/>
            <person name="Aert R."/>
            <person name="Robben J."/>
            <person name="Grymonprez B."/>
            <person name="Weltjens I."/>
            <person name="Vanstreels E."/>
            <person name="Rieger M."/>
            <person name="Schaefer M."/>
            <person name="Mueller-Auer S."/>
            <person name="Gabel C."/>
            <person name="Fuchs M."/>
            <person name="Duesterhoeft A."/>
            <person name="Fritzc C."/>
            <person name="Holzer E."/>
            <person name="Moestl D."/>
            <person name="Hilbert H."/>
            <person name="Borzym K."/>
            <person name="Langer I."/>
            <person name="Beck A."/>
            <person name="Lehrach H."/>
            <person name="Reinhardt R."/>
            <person name="Pohl T.M."/>
            <person name="Eger P."/>
            <person name="Zimmermann W."/>
            <person name="Wedler H."/>
            <person name="Wambutt R."/>
            <person name="Purnelle B."/>
            <person name="Goffeau A."/>
            <person name="Cadieu E."/>
            <person name="Dreano S."/>
            <person name="Gloux S."/>
            <person name="Lelaure V."/>
            <person name="Mottier S."/>
            <person name="Galibert F."/>
            <person name="Aves S.J."/>
            <person name="Xiang Z."/>
            <person name="Hunt C."/>
            <person name="Moore K."/>
            <person name="Hurst S.M."/>
            <person name="Lucas M."/>
            <person name="Rochet M."/>
            <person name="Gaillardin C."/>
            <person name="Tallada V.A."/>
            <person name="Garzon A."/>
            <person name="Thode G."/>
            <person name="Daga R.R."/>
            <person name="Cruzado L."/>
            <person name="Jimenez J."/>
            <person name="Sanchez M."/>
            <person name="del Rey F."/>
            <person name="Benito J."/>
            <person name="Dominguez A."/>
            <person name="Revuelta J.L."/>
            <person name="Moreno S."/>
            <person name="Armstrong J."/>
            <person name="Forsburg S.L."/>
            <person name="Cerutti L."/>
            <person name="Lowe T."/>
            <person name="McCombie W.R."/>
            <person name="Paulsen I."/>
            <person name="Potashkin J."/>
            <person name="Shpakovski G.V."/>
            <person name="Ussery D."/>
            <person name="Barrell B.G."/>
            <person name="Nurse P."/>
        </authorList>
    </citation>
    <scope>NUCLEOTIDE SEQUENCE [LARGE SCALE GENOMIC DNA]</scope>
    <source>
        <strain>972 / ATCC 24843</strain>
    </source>
</reference>
<reference key="2">
    <citation type="journal article" date="2011" name="Science">
        <title>Comparative functional genomics of the fission yeasts.</title>
        <authorList>
            <person name="Rhind N."/>
            <person name="Chen Z."/>
            <person name="Yassour M."/>
            <person name="Thompson D.A."/>
            <person name="Haas B.J."/>
            <person name="Habib N."/>
            <person name="Wapinski I."/>
            <person name="Roy S."/>
            <person name="Lin M.F."/>
            <person name="Heiman D.I."/>
            <person name="Young S.K."/>
            <person name="Furuya K."/>
            <person name="Guo Y."/>
            <person name="Pidoux A."/>
            <person name="Chen H.M."/>
            <person name="Robbertse B."/>
            <person name="Goldberg J.M."/>
            <person name="Aoki K."/>
            <person name="Bayne E.H."/>
            <person name="Berlin A.M."/>
            <person name="Desjardins C.A."/>
            <person name="Dobbs E."/>
            <person name="Dukaj L."/>
            <person name="Fan L."/>
            <person name="FitzGerald M.G."/>
            <person name="French C."/>
            <person name="Gujja S."/>
            <person name="Hansen K."/>
            <person name="Keifenheim D."/>
            <person name="Levin J.Z."/>
            <person name="Mosher R.A."/>
            <person name="Mueller C.A."/>
            <person name="Pfiffner J."/>
            <person name="Priest M."/>
            <person name="Russ C."/>
            <person name="Smialowska A."/>
            <person name="Swoboda P."/>
            <person name="Sykes S.M."/>
            <person name="Vaughn M."/>
            <person name="Vengrova S."/>
            <person name="Yoder R."/>
            <person name="Zeng Q."/>
            <person name="Allshire R."/>
            <person name="Baulcombe D."/>
            <person name="Birren B.W."/>
            <person name="Brown W."/>
            <person name="Ekwall K."/>
            <person name="Kellis M."/>
            <person name="Leatherwood J."/>
            <person name="Levin H."/>
            <person name="Margalit H."/>
            <person name="Martienssen R."/>
            <person name="Nieduszynski C.A."/>
            <person name="Spatafora J.W."/>
            <person name="Friedman N."/>
            <person name="Dalgaard J.Z."/>
            <person name="Baumann P."/>
            <person name="Niki H."/>
            <person name="Regev A."/>
            <person name="Nusbaum C."/>
        </authorList>
    </citation>
    <scope>REVISION OF GENE MODEL</scope>
</reference>
<reference key="3">
    <citation type="journal article" date="2006" name="Nat. Biotechnol.">
        <title>ORFeome cloning and global analysis of protein localization in the fission yeast Schizosaccharomyces pombe.</title>
        <authorList>
            <person name="Matsuyama A."/>
            <person name="Arai R."/>
            <person name="Yashiroda Y."/>
            <person name="Shirai A."/>
            <person name="Kamata A."/>
            <person name="Sekido S."/>
            <person name="Kobayashi Y."/>
            <person name="Hashimoto A."/>
            <person name="Hamamoto M."/>
            <person name="Hiraoka Y."/>
            <person name="Horinouchi S."/>
            <person name="Yoshida M."/>
        </authorList>
    </citation>
    <scope>SUBCELLULAR LOCATION [LARGE SCALE ANALYSIS]</scope>
</reference>
<reference key="4">
    <citation type="journal article" date="2010" name="Genome Biol.">
        <title>Global fitness profiling of fission yeast deletion strains by barcode sequencing.</title>
        <authorList>
            <person name="Han T.X."/>
            <person name="Xu X.Y."/>
            <person name="Zhang M.J."/>
            <person name="Peng X."/>
            <person name="Du L.L."/>
        </authorList>
    </citation>
    <scope>DISRUPTION PHENOTYPE</scope>
</reference>
<accession>O94407</accession>